<organism>
    <name type="scientific">Thermotoga sp. (strain RQ2)</name>
    <dbReference type="NCBI Taxonomy" id="126740"/>
    <lineage>
        <taxon>Bacteria</taxon>
        <taxon>Thermotogati</taxon>
        <taxon>Thermotogota</taxon>
        <taxon>Thermotogae</taxon>
        <taxon>Thermotogales</taxon>
        <taxon>Thermotogaceae</taxon>
        <taxon>Thermotoga</taxon>
    </lineage>
</organism>
<protein>
    <recommendedName>
        <fullName evidence="1">Glucose-1-phosphate adenylyltransferase</fullName>
        <ecNumber evidence="1">2.7.7.27</ecNumber>
    </recommendedName>
    <alternativeName>
        <fullName evidence="1">ADP-glucose pyrophosphorylase</fullName>
        <shortName evidence="1">ADPGlc PPase</shortName>
    </alternativeName>
    <alternativeName>
        <fullName evidence="1">ADP-glucose synthase</fullName>
    </alternativeName>
</protein>
<gene>
    <name evidence="1" type="primary">glgC</name>
    <name type="ordered locus">TRQ2_0708</name>
</gene>
<name>GLGC_THESQ</name>
<sequence>MGNTVAMILAGGQGTRLGVLTERIAKPAVPFGGKYRLIDFTLSNCVNSGIYRVGVLTQYRPHVLSKHIGIGRPWDLDRKDGGVEILPPYVGRHESDWYKGTANAVYQNLEFLEENDAELVLILSGDHVYAMNYNDLIDYHLLKEADGTIACMEVPIEEASRFGIMITDVDGRIVDFEEKPAKPRSNLASLGIYVFNYEFLKKVLIEDENDPNSSHDFGKDVIPRILRENLGSLYAFRFDGYWRDVGTLRSYWEANLELVLPVPPFNLYDPNWRFFTHTEEMPPAYVAPGSKVSTSLVSEGAEVYGNVFNSVIFQGVKIGRGTVVKNSVIMTRTEIGENCYLENVIIAENVKVGNNVRMGVGEDAESKLDPKVYSGLLTVVGMNSVIPDDMVIGKNCVIGIGVRPEDFKSKTLESGDYVIVREE</sequence>
<feature type="chain" id="PRO_1000130510" description="Glucose-1-phosphate adenylyltransferase">
    <location>
        <begin position="1"/>
        <end position="423"/>
    </location>
</feature>
<feature type="binding site" evidence="1">
    <location>
        <position position="98"/>
    </location>
    <ligand>
        <name>alpha-D-glucose 1-phosphate</name>
        <dbReference type="ChEBI" id="CHEBI:58601"/>
    </ligand>
</feature>
<feature type="binding site" evidence="1">
    <location>
        <position position="163"/>
    </location>
    <ligand>
        <name>alpha-D-glucose 1-phosphate</name>
        <dbReference type="ChEBI" id="CHEBI:58601"/>
    </ligand>
</feature>
<feature type="binding site" evidence="1">
    <location>
        <begin position="178"/>
        <end position="179"/>
    </location>
    <ligand>
        <name>alpha-D-glucose 1-phosphate</name>
        <dbReference type="ChEBI" id="CHEBI:58601"/>
    </ligand>
</feature>
<feature type="binding site" evidence="1">
    <location>
        <position position="189"/>
    </location>
    <ligand>
        <name>alpha-D-glucose 1-phosphate</name>
        <dbReference type="ChEBI" id="CHEBI:58601"/>
    </ligand>
</feature>
<reference key="1">
    <citation type="journal article" date="2011" name="J. Bacteriol.">
        <title>Genome sequence of Thermotoga sp. strain RQ2, a hyperthermophilic bacterium isolated from a geothermally heated region of the seafloor near Ribeira Quente, the Azores.</title>
        <authorList>
            <person name="Swithers K.S."/>
            <person name="DiPippo J.L."/>
            <person name="Bruce D.C."/>
            <person name="Detter C."/>
            <person name="Tapia R."/>
            <person name="Han S."/>
            <person name="Saunders E."/>
            <person name="Goodwin L.A."/>
            <person name="Han J."/>
            <person name="Woyke T."/>
            <person name="Pitluck S."/>
            <person name="Pennacchio L."/>
            <person name="Nolan M."/>
            <person name="Mikhailova N."/>
            <person name="Lykidis A."/>
            <person name="Land M.L."/>
            <person name="Brettin T."/>
            <person name="Stetter K.O."/>
            <person name="Nelson K.E."/>
            <person name="Gogarten J.P."/>
            <person name="Noll K.M."/>
        </authorList>
    </citation>
    <scope>NUCLEOTIDE SEQUENCE [LARGE SCALE GENOMIC DNA]</scope>
    <source>
        <strain>RQ2</strain>
    </source>
</reference>
<comment type="function">
    <text evidence="1">Involved in the biosynthesis of ADP-glucose, a building block required for the elongation reactions to produce glycogen. Catalyzes the reaction between ATP and alpha-D-glucose 1-phosphate (G1P) to produce pyrophosphate and ADP-Glc.</text>
</comment>
<comment type="catalytic activity">
    <reaction evidence="1">
        <text>alpha-D-glucose 1-phosphate + ATP + H(+) = ADP-alpha-D-glucose + diphosphate</text>
        <dbReference type="Rhea" id="RHEA:12120"/>
        <dbReference type="ChEBI" id="CHEBI:15378"/>
        <dbReference type="ChEBI" id="CHEBI:30616"/>
        <dbReference type="ChEBI" id="CHEBI:33019"/>
        <dbReference type="ChEBI" id="CHEBI:57498"/>
        <dbReference type="ChEBI" id="CHEBI:58601"/>
        <dbReference type="EC" id="2.7.7.27"/>
    </reaction>
</comment>
<comment type="pathway">
    <text evidence="1">Glycan biosynthesis; glycogen biosynthesis.</text>
</comment>
<comment type="subunit">
    <text evidence="1">Homotetramer.</text>
</comment>
<comment type="similarity">
    <text evidence="1">Belongs to the bacterial/plant glucose-1-phosphate adenylyltransferase family.</text>
</comment>
<dbReference type="EC" id="2.7.7.27" evidence="1"/>
<dbReference type="EMBL" id="CP000969">
    <property type="protein sequence ID" value="ACB09061.1"/>
    <property type="molecule type" value="Genomic_DNA"/>
</dbReference>
<dbReference type="RefSeq" id="WP_012310693.1">
    <property type="nucleotide sequence ID" value="NC_010483.1"/>
</dbReference>
<dbReference type="SMR" id="B1L9R3"/>
<dbReference type="KEGG" id="trq:TRQ2_0708"/>
<dbReference type="HOGENOM" id="CLU_029499_14_0_0"/>
<dbReference type="UniPathway" id="UPA00164"/>
<dbReference type="Proteomes" id="UP000001687">
    <property type="component" value="Chromosome"/>
</dbReference>
<dbReference type="GO" id="GO:0005524">
    <property type="term" value="F:ATP binding"/>
    <property type="evidence" value="ECO:0007669"/>
    <property type="project" value="UniProtKB-KW"/>
</dbReference>
<dbReference type="GO" id="GO:0008878">
    <property type="term" value="F:glucose-1-phosphate adenylyltransferase activity"/>
    <property type="evidence" value="ECO:0007669"/>
    <property type="project" value="UniProtKB-UniRule"/>
</dbReference>
<dbReference type="GO" id="GO:0005978">
    <property type="term" value="P:glycogen biosynthetic process"/>
    <property type="evidence" value="ECO:0007669"/>
    <property type="project" value="UniProtKB-UniRule"/>
</dbReference>
<dbReference type="CDD" id="cd02508">
    <property type="entry name" value="ADP_Glucose_PP"/>
    <property type="match status" value="1"/>
</dbReference>
<dbReference type="CDD" id="cd04651">
    <property type="entry name" value="LbH_G1P_AT_C"/>
    <property type="match status" value="1"/>
</dbReference>
<dbReference type="Gene3D" id="2.160.10.10">
    <property type="entry name" value="Hexapeptide repeat proteins"/>
    <property type="match status" value="1"/>
</dbReference>
<dbReference type="Gene3D" id="3.90.550.10">
    <property type="entry name" value="Spore Coat Polysaccharide Biosynthesis Protein SpsA, Chain A"/>
    <property type="match status" value="1"/>
</dbReference>
<dbReference type="HAMAP" id="MF_00624">
    <property type="entry name" value="GlgC"/>
    <property type="match status" value="1"/>
</dbReference>
<dbReference type="InterPro" id="IPR011831">
    <property type="entry name" value="ADP-Glc_PPase"/>
</dbReference>
<dbReference type="InterPro" id="IPR005836">
    <property type="entry name" value="ADP_Glu_pyroP_CS"/>
</dbReference>
<dbReference type="InterPro" id="IPR023049">
    <property type="entry name" value="GlgC_bac"/>
</dbReference>
<dbReference type="InterPro" id="IPR056818">
    <property type="entry name" value="GlmU/GlgC-like_hexapep"/>
</dbReference>
<dbReference type="InterPro" id="IPR005835">
    <property type="entry name" value="NTP_transferase_dom"/>
</dbReference>
<dbReference type="InterPro" id="IPR029044">
    <property type="entry name" value="Nucleotide-diphossugar_trans"/>
</dbReference>
<dbReference type="InterPro" id="IPR011004">
    <property type="entry name" value="Trimer_LpxA-like_sf"/>
</dbReference>
<dbReference type="NCBIfam" id="TIGR02091">
    <property type="entry name" value="glgC"/>
    <property type="match status" value="1"/>
</dbReference>
<dbReference type="NCBIfam" id="NF003670">
    <property type="entry name" value="PRK05293.1"/>
    <property type="match status" value="1"/>
</dbReference>
<dbReference type="PANTHER" id="PTHR43523:SF2">
    <property type="entry name" value="GLUCOSE-1-PHOSPHATE ADENYLYLTRANSFERASE"/>
    <property type="match status" value="1"/>
</dbReference>
<dbReference type="PANTHER" id="PTHR43523">
    <property type="entry name" value="GLUCOSE-1-PHOSPHATE ADENYLYLTRANSFERASE-RELATED"/>
    <property type="match status" value="1"/>
</dbReference>
<dbReference type="Pfam" id="PF24894">
    <property type="entry name" value="Hexapep_GlmU"/>
    <property type="match status" value="1"/>
</dbReference>
<dbReference type="Pfam" id="PF00483">
    <property type="entry name" value="NTP_transferase"/>
    <property type="match status" value="1"/>
</dbReference>
<dbReference type="SUPFAM" id="SSF53448">
    <property type="entry name" value="Nucleotide-diphospho-sugar transferases"/>
    <property type="match status" value="1"/>
</dbReference>
<dbReference type="SUPFAM" id="SSF51161">
    <property type="entry name" value="Trimeric LpxA-like enzymes"/>
    <property type="match status" value="1"/>
</dbReference>
<dbReference type="PROSITE" id="PS00808">
    <property type="entry name" value="ADP_GLC_PYROPHOSPH_1"/>
    <property type="match status" value="1"/>
</dbReference>
<dbReference type="PROSITE" id="PS00809">
    <property type="entry name" value="ADP_GLC_PYROPHOSPH_2"/>
    <property type="match status" value="1"/>
</dbReference>
<evidence type="ECO:0000255" key="1">
    <source>
        <dbReference type="HAMAP-Rule" id="MF_00624"/>
    </source>
</evidence>
<proteinExistence type="inferred from homology"/>
<accession>B1L9R3</accession>
<keyword id="KW-0067">ATP-binding</keyword>
<keyword id="KW-0119">Carbohydrate metabolism</keyword>
<keyword id="KW-0320">Glycogen biosynthesis</keyword>
<keyword id="KW-0321">Glycogen metabolism</keyword>
<keyword id="KW-0547">Nucleotide-binding</keyword>
<keyword id="KW-0548">Nucleotidyltransferase</keyword>
<keyword id="KW-0808">Transferase</keyword>